<accession>Q5RKH1</accession>
<gene>
    <name type="primary">Prp4k</name>
    <name type="synonym">Prpf4b</name>
</gene>
<keyword id="KW-0007">Acetylation</keyword>
<keyword id="KW-0067">ATP-binding</keyword>
<keyword id="KW-0137">Centromere</keyword>
<keyword id="KW-0158">Chromosome</keyword>
<keyword id="KW-1017">Isopeptide bond</keyword>
<keyword id="KW-0418">Kinase</keyword>
<keyword id="KW-0995">Kinetochore</keyword>
<keyword id="KW-0507">mRNA processing</keyword>
<keyword id="KW-0508">mRNA splicing</keyword>
<keyword id="KW-0547">Nucleotide-binding</keyword>
<keyword id="KW-0539">Nucleus</keyword>
<keyword id="KW-0597">Phosphoprotein</keyword>
<keyword id="KW-1185">Reference proteome</keyword>
<keyword id="KW-0723">Serine/threonine-protein kinase</keyword>
<keyword id="KW-0747">Spliceosome</keyword>
<keyword id="KW-0808">Transferase</keyword>
<keyword id="KW-0832">Ubl conjugation</keyword>
<organism>
    <name type="scientific">Rattus norvegicus</name>
    <name type="common">Rat</name>
    <dbReference type="NCBI Taxonomy" id="10116"/>
    <lineage>
        <taxon>Eukaryota</taxon>
        <taxon>Metazoa</taxon>
        <taxon>Chordata</taxon>
        <taxon>Craniata</taxon>
        <taxon>Vertebrata</taxon>
        <taxon>Euteleostomi</taxon>
        <taxon>Mammalia</taxon>
        <taxon>Eutheria</taxon>
        <taxon>Euarchontoglires</taxon>
        <taxon>Glires</taxon>
        <taxon>Rodentia</taxon>
        <taxon>Myomorpha</taxon>
        <taxon>Muroidea</taxon>
        <taxon>Muridae</taxon>
        <taxon>Murinae</taxon>
        <taxon>Rattus</taxon>
    </lineage>
</organism>
<evidence type="ECO:0000250" key="1">
    <source>
        <dbReference type="UniProtKB" id="Q13523"/>
    </source>
</evidence>
<evidence type="ECO:0000250" key="2">
    <source>
        <dbReference type="UniProtKB" id="Q61136"/>
    </source>
</evidence>
<evidence type="ECO:0000255" key="3">
    <source>
        <dbReference type="PROSITE-ProRule" id="PRU00159"/>
    </source>
</evidence>
<evidence type="ECO:0000255" key="4">
    <source>
        <dbReference type="PROSITE-ProRule" id="PRU10027"/>
    </source>
</evidence>
<evidence type="ECO:0000256" key="5">
    <source>
        <dbReference type="SAM" id="MobiDB-lite"/>
    </source>
</evidence>
<evidence type="ECO:0000305" key="6"/>
<evidence type="ECO:0007744" key="7">
    <source>
    </source>
</evidence>
<evidence type="ECO:0007744" key="8">
    <source>
    </source>
</evidence>
<proteinExistence type="evidence at protein level"/>
<comment type="function">
    <text evidence="1">Serine/threonine kinase involved in spliceosomal assembly as well as mitosis and signaling regulation. Connects chromatin mediated regulation of transcription and pre-mRNA splicing. During spliceosomal assembly, interacts with and phosphorylates PRPF6 and PRPF31, components of the U4/U6-U5 tri-small nuclear ribonucleoprotein (snRNP), to facilitate the formation of the spliceosome B complex. Plays a role in regulating transcription and the spindle assembly checkpoint (SAC). Associates with U5 snRNP and NCOR1 deacetylase complexes which may allow a coordination of pre-mRNA splicing with chromatin remodeling events involved in transcriptional regulation. Associates and probably phosphorylates SMARCA4 and NCOR1. Phosphorylates SRSF1. Associates with kinetochores during mitosis and is necessary for recruitment and maintenance of the checkpoint proteins such as MAD1L1 and MAD12L1 at the kinetochores. Phosphorylates and regulates the activity of the transcription factors such as ELK1 and KLF13. Phosphorylates nuclear YAP1 and WWTR1/TAZ which induces nuclear exclusion and regulates Hippo signaling pathway, involved in tissue growth control.</text>
</comment>
<comment type="catalytic activity">
    <reaction evidence="1">
        <text>L-seryl-[protein] + ATP = O-phospho-L-seryl-[protein] + ADP + H(+)</text>
        <dbReference type="Rhea" id="RHEA:17989"/>
        <dbReference type="Rhea" id="RHEA-COMP:9863"/>
        <dbReference type="Rhea" id="RHEA-COMP:11604"/>
        <dbReference type="ChEBI" id="CHEBI:15378"/>
        <dbReference type="ChEBI" id="CHEBI:29999"/>
        <dbReference type="ChEBI" id="CHEBI:30616"/>
        <dbReference type="ChEBI" id="CHEBI:83421"/>
        <dbReference type="ChEBI" id="CHEBI:456216"/>
        <dbReference type="EC" id="2.7.11.1"/>
    </reaction>
    <physiologicalReaction direction="left-to-right" evidence="1">
        <dbReference type="Rhea" id="RHEA:17990"/>
    </physiologicalReaction>
</comment>
<comment type="catalytic activity">
    <reaction evidence="1">
        <text>L-threonyl-[protein] + ATP = O-phospho-L-threonyl-[protein] + ADP + H(+)</text>
        <dbReference type="Rhea" id="RHEA:46608"/>
        <dbReference type="Rhea" id="RHEA-COMP:11060"/>
        <dbReference type="Rhea" id="RHEA-COMP:11605"/>
        <dbReference type="ChEBI" id="CHEBI:15378"/>
        <dbReference type="ChEBI" id="CHEBI:30013"/>
        <dbReference type="ChEBI" id="CHEBI:30616"/>
        <dbReference type="ChEBI" id="CHEBI:61977"/>
        <dbReference type="ChEBI" id="CHEBI:456216"/>
        <dbReference type="EC" id="2.7.11.1"/>
    </reaction>
    <physiologicalReaction direction="left-to-right" evidence="1">
        <dbReference type="Rhea" id="RHEA:46609"/>
    </physiologicalReaction>
</comment>
<comment type="subunit">
    <text evidence="1">Interacts with CLK1 C-terminus. Associates with the U5 snRNP and NCOR1 deacetylase complexes. Identified in the spliceosome C complex.</text>
</comment>
<comment type="subcellular location">
    <subcellularLocation>
        <location evidence="1">Nucleus</location>
    </subcellularLocation>
    <subcellularLocation>
        <location evidence="1">Chromosome</location>
        <location evidence="1">Centromere</location>
        <location evidence="1">Kinetochore</location>
    </subcellularLocation>
    <text evidence="1">Located throughout the nucleus, excluding the nucleolus but enriched in multiple speckles.</text>
</comment>
<comment type="PTM">
    <text evidence="1">Phosphorylated by CLK1. Autophosphorylated; phosphorylation inhibits interaction with its targets, such as PRPF6 or SMARCA4.</text>
</comment>
<comment type="similarity">
    <text evidence="6">Belongs to the protein kinase superfamily. CMGC Ser/Thr protein kinase family.</text>
</comment>
<dbReference type="EC" id="2.7.11.1"/>
<dbReference type="EMBL" id="BC085927">
    <property type="protein sequence ID" value="AAH85927.1"/>
    <property type="molecule type" value="mRNA"/>
</dbReference>
<dbReference type="RefSeq" id="NP_001011923.1">
    <property type="nucleotide sequence ID" value="NM_001011923.1"/>
</dbReference>
<dbReference type="SMR" id="Q5RKH1"/>
<dbReference type="BioGRID" id="253413">
    <property type="interactions" value="2"/>
</dbReference>
<dbReference type="FunCoup" id="Q5RKH1">
    <property type="interactions" value="6007"/>
</dbReference>
<dbReference type="IntAct" id="Q5RKH1">
    <property type="interactions" value="3"/>
</dbReference>
<dbReference type="STRING" id="10116.ENSRNOP00000022902"/>
<dbReference type="iPTMnet" id="Q5RKH1"/>
<dbReference type="PhosphoSitePlus" id="Q5RKH1"/>
<dbReference type="jPOST" id="Q5RKH1"/>
<dbReference type="PaxDb" id="10116-ENSRNOP00000022902"/>
<dbReference type="Ensembl" id="ENSRNOT00000081993.2">
    <property type="protein sequence ID" value="ENSRNOP00000072106.2"/>
    <property type="gene ID" value="ENSRNOG00000016705.8"/>
</dbReference>
<dbReference type="GeneID" id="291078"/>
<dbReference type="KEGG" id="rno:291078"/>
<dbReference type="UCSC" id="RGD:1307784">
    <property type="organism name" value="rat"/>
</dbReference>
<dbReference type="AGR" id="RGD:1307784"/>
<dbReference type="CTD" id="19134"/>
<dbReference type="RGD" id="1307784">
    <property type="gene designation" value="Prpf4b"/>
</dbReference>
<dbReference type="eggNOG" id="KOG0670">
    <property type="taxonomic scope" value="Eukaryota"/>
</dbReference>
<dbReference type="GeneTree" id="ENSGT00940000155562"/>
<dbReference type="InParanoid" id="Q5RKH1"/>
<dbReference type="OMA" id="MNRGDNA"/>
<dbReference type="OrthoDB" id="3967at2759"/>
<dbReference type="PhylomeDB" id="Q5RKH1"/>
<dbReference type="Reactome" id="R-RNO-72163">
    <property type="pathway name" value="mRNA Splicing - Major Pathway"/>
</dbReference>
<dbReference type="PRO" id="PR:Q5RKH1"/>
<dbReference type="Proteomes" id="UP000002494">
    <property type="component" value="Chromosome 17"/>
</dbReference>
<dbReference type="Bgee" id="ENSRNOG00000016705">
    <property type="expression patterns" value="Expressed in spleen and 20 other cell types or tissues"/>
</dbReference>
<dbReference type="ExpressionAtlas" id="Q5RKH1">
    <property type="expression patterns" value="baseline and differential"/>
</dbReference>
<dbReference type="GO" id="GO:0071013">
    <property type="term" value="C:catalytic step 2 spliceosome"/>
    <property type="evidence" value="ECO:0000266"/>
    <property type="project" value="RGD"/>
</dbReference>
<dbReference type="GO" id="GO:0005694">
    <property type="term" value="C:chromosome"/>
    <property type="evidence" value="ECO:0000266"/>
    <property type="project" value="RGD"/>
</dbReference>
<dbReference type="GO" id="GO:0000776">
    <property type="term" value="C:kinetochore"/>
    <property type="evidence" value="ECO:0000250"/>
    <property type="project" value="UniProtKB"/>
</dbReference>
<dbReference type="GO" id="GO:0016607">
    <property type="term" value="C:nuclear speck"/>
    <property type="evidence" value="ECO:0000250"/>
    <property type="project" value="UniProtKB"/>
</dbReference>
<dbReference type="GO" id="GO:0005634">
    <property type="term" value="C:nucleus"/>
    <property type="evidence" value="ECO:0000266"/>
    <property type="project" value="RGD"/>
</dbReference>
<dbReference type="GO" id="GO:0005524">
    <property type="term" value="F:ATP binding"/>
    <property type="evidence" value="ECO:0007669"/>
    <property type="project" value="UniProtKB-KW"/>
</dbReference>
<dbReference type="GO" id="GO:0106310">
    <property type="term" value="F:protein serine kinase activity"/>
    <property type="evidence" value="ECO:0007669"/>
    <property type="project" value="RHEA"/>
</dbReference>
<dbReference type="GO" id="GO:0004674">
    <property type="term" value="F:protein serine/threonine kinase activity"/>
    <property type="evidence" value="ECO:0000250"/>
    <property type="project" value="UniProtKB"/>
</dbReference>
<dbReference type="GO" id="GO:0045292">
    <property type="term" value="P:mRNA cis splicing, via spliceosome"/>
    <property type="evidence" value="ECO:0007669"/>
    <property type="project" value="InterPro"/>
</dbReference>
<dbReference type="GO" id="GO:0035332">
    <property type="term" value="P:positive regulation of hippo signaling"/>
    <property type="evidence" value="ECO:0000266"/>
    <property type="project" value="RGD"/>
</dbReference>
<dbReference type="GO" id="GO:0046827">
    <property type="term" value="P:positive regulation of protein export from nucleus"/>
    <property type="evidence" value="ECO:0000266"/>
    <property type="project" value="RGD"/>
</dbReference>
<dbReference type="GO" id="GO:0090266">
    <property type="term" value="P:regulation of mitotic cell cycle spindle assembly checkpoint"/>
    <property type="evidence" value="ECO:0000250"/>
    <property type="project" value="UniProtKB"/>
</dbReference>
<dbReference type="GO" id="GO:0000387">
    <property type="term" value="P:spliceosomal snRNP assembly"/>
    <property type="evidence" value="ECO:0000250"/>
    <property type="project" value="UniProtKB"/>
</dbReference>
<dbReference type="GO" id="GO:0000244">
    <property type="term" value="P:spliceosomal tri-snRNP complex assembly"/>
    <property type="evidence" value="ECO:0000250"/>
    <property type="project" value="UniProtKB"/>
</dbReference>
<dbReference type="CDD" id="cd14135">
    <property type="entry name" value="STKc_PRP4"/>
    <property type="match status" value="1"/>
</dbReference>
<dbReference type="FunFam" id="1.10.510.10:FF:000078">
    <property type="entry name" value="Serine/threonine-protein kinase PRP4 homolog"/>
    <property type="match status" value="1"/>
</dbReference>
<dbReference type="FunFam" id="3.30.200.20:FF:000123">
    <property type="entry name" value="serine/threonine-protein kinase PRP4 homolog"/>
    <property type="match status" value="1"/>
</dbReference>
<dbReference type="Gene3D" id="3.30.200.20">
    <property type="entry name" value="Phosphorylase Kinase, domain 1"/>
    <property type="match status" value="1"/>
</dbReference>
<dbReference type="Gene3D" id="1.10.510.10">
    <property type="entry name" value="Transferase(Phosphotransferase) domain 1"/>
    <property type="match status" value="1"/>
</dbReference>
<dbReference type="InterPro" id="IPR011009">
    <property type="entry name" value="Kinase-like_dom_sf"/>
</dbReference>
<dbReference type="InterPro" id="IPR000719">
    <property type="entry name" value="Prot_kinase_dom"/>
</dbReference>
<dbReference type="InterPro" id="IPR008271">
    <property type="entry name" value="Ser/Thr_kinase_AS"/>
</dbReference>
<dbReference type="InterPro" id="IPR050494">
    <property type="entry name" value="Ser_Thr_dual-spec_kinase"/>
</dbReference>
<dbReference type="InterPro" id="IPR044092">
    <property type="entry name" value="STKc_PRP4"/>
</dbReference>
<dbReference type="PANTHER" id="PTHR24058">
    <property type="entry name" value="DUAL SPECIFICITY PROTEIN KINASE"/>
    <property type="match status" value="1"/>
</dbReference>
<dbReference type="PANTHER" id="PTHR24058:SF103">
    <property type="entry name" value="SERINE_THREONINE-PROTEIN KINASE PRP4 HOMOLOG"/>
    <property type="match status" value="1"/>
</dbReference>
<dbReference type="Pfam" id="PF00069">
    <property type="entry name" value="Pkinase"/>
    <property type="match status" value="1"/>
</dbReference>
<dbReference type="SMART" id="SM00220">
    <property type="entry name" value="S_TKc"/>
    <property type="match status" value="1"/>
</dbReference>
<dbReference type="SUPFAM" id="SSF56112">
    <property type="entry name" value="Protein kinase-like (PK-like)"/>
    <property type="match status" value="1"/>
</dbReference>
<dbReference type="PROSITE" id="PS50011">
    <property type="entry name" value="PROTEIN_KINASE_DOM"/>
    <property type="match status" value="1"/>
</dbReference>
<dbReference type="PROSITE" id="PS00108">
    <property type="entry name" value="PROTEIN_KINASE_ST"/>
    <property type="match status" value="1"/>
</dbReference>
<protein>
    <recommendedName>
        <fullName>Serine/threonine-protein kinase PRP4 homolog</fullName>
        <ecNumber>2.7.11.1</ecNumber>
    </recommendedName>
    <alternativeName>
        <fullName>PRP4 pre-mRNA-processing factor 4 homolog</fullName>
    </alternativeName>
</protein>
<name>PRP4K_RAT</name>
<reference key="1">
    <citation type="journal article" date="2004" name="Genome Res.">
        <title>The status, quality, and expansion of the NIH full-length cDNA project: the Mammalian Gene Collection (MGC).</title>
        <authorList>
            <consortium name="The MGC Project Team"/>
        </authorList>
    </citation>
    <scope>NUCLEOTIDE SEQUENCE [LARGE SCALE MRNA]</scope>
    <source>
        <tissue>Kidney</tissue>
    </source>
</reference>
<reference key="2">
    <citation type="journal article" date="2006" name="Proc. Natl. Acad. Sci. U.S.A.">
        <title>Quantitative phosphoproteomics of vasopressin-sensitive renal cells: regulation of aquaporin-2 phosphorylation at two sites.</title>
        <authorList>
            <person name="Hoffert J.D."/>
            <person name="Pisitkun T."/>
            <person name="Wang G."/>
            <person name="Shen R.-F."/>
            <person name="Knepper M.A."/>
        </authorList>
    </citation>
    <scope>PHOSPHORYLATION [LARGE SCALE ANALYSIS] AT SER-852</scope>
    <scope>IDENTIFICATION BY MASS SPECTROMETRY [LARGE SCALE ANALYSIS]</scope>
</reference>
<reference key="3">
    <citation type="journal article" date="2012" name="Nat. Commun.">
        <title>Quantitative maps of protein phosphorylation sites across 14 different rat organs and tissues.</title>
        <authorList>
            <person name="Lundby A."/>
            <person name="Secher A."/>
            <person name="Lage K."/>
            <person name="Nordsborg N.B."/>
            <person name="Dmytriyev A."/>
            <person name="Lundby C."/>
            <person name="Olsen J.V."/>
        </authorList>
    </citation>
    <scope>PHOSPHORYLATION [LARGE SCALE ANALYSIS] AT SER-8; SER-21; SER-24; SER-33; SER-88; SER-94; SER-143; SER-145; SER-366; SER-368; SER-431; SER-518; SER-519; SER-520; SER-578; SER-580 AND TYR-849</scope>
    <scope>IDENTIFICATION BY MASS SPECTROMETRY [LARGE SCALE ANALYSIS]</scope>
</reference>
<sequence length="1007" mass="117007">MAATEPPSLREQPEMDDADNSEKSVNEENGEVSEDQSQNKHSRHKKKKHKHRSKHKKHKHSSEEDRDKKHKHKHKHKKHKRKEVLDASDKEGLSPAKRTKLDDLALLEDLEKQRALIKAELDNELMEGKVQSGMGLILQGYESGSEEEGEIHEKARNGNRSSTRSSSTRGKLEITDNKNSAKKRSKSRSKERTRHRSDKRKSKGAVEMMREKANRSKSKERRKSKSPSKRSKSQDQARKSKSPTLRRRSQEKVGKARSPADEKIKSEEKGKIKDRKKSPIVNERSRDRSKKSKSPVDLRDKSKDRRSRSKERKSKRSEIDKEKKPIKSPSKDASSGKENRSPSRRPGRSPKRRSLSPKQRDKSRRSRSPLLNDRRSKQSKSPSRTLSPGRRAKSRSLERKRREPERRRLSSPRTRPRDDILGRCERSKDASPINRWSPSRRRSRSPIRRRSRSPLRRSRSPRRRSRSPRRRDRSRRSRSRLRRRSRSRGGHRRRSRSKVKEDKFKGSLSEGMKVEQESSSDDNLEDFDVEEEDEEAVIEQRRIQRQAIVQKYKYLAEDSNISVPSEPSSPQSSTRSRSPSPDDILERVAADVKEYERENVDTFEASVKAKHNLMTVEQNNGSSQKKLLAPDMFTESDDMFAAYFDSARLRAAGIGKDFKENPNLRDNWTDAEGYYRVNIGEVLDKRYNVYGYTGQGVFSNVVRARDNARANQEVAVKIIRNNELMQKTGLKELEFLKKLNDADPDDKFHCLRLFRHFYHKQHLCLVFEPLSMNLREVLKKYGKDVGLHIKAVRSYSQQLFLALKLLKRCNILHADIKPDNILVNESKTILKLCDFGSASHVADNDITPYLVSRFYRAPEIIIGKSYDYGIDMWSVGCTLYELYTGKILFPGKTNNHMLKLAMDLKGKMPNKMIRKGVFKDQHFDQNLNFMYIEVDKVTEREKVTVMSTINPTKDLLADLIGCQRLPEDQRKKVHQLKDLLDQILMLDPAKRISINQALQHAFIQEKI</sequence>
<feature type="initiator methionine" description="Removed" evidence="1">
    <location>
        <position position="1"/>
    </location>
</feature>
<feature type="chain" id="PRO_0000326140" description="Serine/threonine-protein kinase PRP4 homolog">
    <location>
        <begin position="2"/>
        <end position="1007"/>
    </location>
</feature>
<feature type="domain" description="Protein kinase" evidence="3">
    <location>
        <begin position="687"/>
        <end position="1003"/>
    </location>
</feature>
<feature type="region of interest" description="Disordered" evidence="5">
    <location>
        <begin position="1"/>
        <end position="104"/>
    </location>
</feature>
<feature type="region of interest" description="Disordered" evidence="5">
    <location>
        <begin position="141"/>
        <end position="535"/>
    </location>
</feature>
<feature type="region of interest" description="Disordered" evidence="5">
    <location>
        <begin position="560"/>
        <end position="583"/>
    </location>
</feature>
<feature type="compositionally biased region" description="Basic residues" evidence="5">
    <location>
        <begin position="40"/>
        <end position="60"/>
    </location>
</feature>
<feature type="compositionally biased region" description="Basic residues" evidence="5">
    <location>
        <begin position="68"/>
        <end position="82"/>
    </location>
</feature>
<feature type="compositionally biased region" description="Basic and acidic residues" evidence="5">
    <location>
        <begin position="83"/>
        <end position="92"/>
    </location>
</feature>
<feature type="compositionally biased region" description="Low complexity" evidence="5">
    <location>
        <begin position="158"/>
        <end position="169"/>
    </location>
</feature>
<feature type="compositionally biased region" description="Basic residues" evidence="5">
    <location>
        <begin position="180"/>
        <end position="203"/>
    </location>
</feature>
<feature type="compositionally biased region" description="Basic residues" evidence="5">
    <location>
        <begin position="215"/>
        <end position="231"/>
    </location>
</feature>
<feature type="compositionally biased region" description="Basic and acidic residues" evidence="5">
    <location>
        <begin position="248"/>
        <end position="271"/>
    </location>
</feature>
<feature type="compositionally biased region" description="Basic and acidic residues" evidence="5">
    <location>
        <begin position="294"/>
        <end position="303"/>
    </location>
</feature>
<feature type="compositionally biased region" description="Basic residues" evidence="5">
    <location>
        <begin position="304"/>
        <end position="315"/>
    </location>
</feature>
<feature type="compositionally biased region" description="Basic and acidic residues" evidence="5">
    <location>
        <begin position="316"/>
        <end position="325"/>
    </location>
</feature>
<feature type="compositionally biased region" description="Basic residues" evidence="5">
    <location>
        <begin position="342"/>
        <end position="367"/>
    </location>
</feature>
<feature type="compositionally biased region" description="Basic and acidic residues" evidence="5">
    <location>
        <begin position="395"/>
        <end position="408"/>
    </location>
</feature>
<feature type="compositionally biased region" description="Basic and acidic residues" evidence="5">
    <location>
        <begin position="415"/>
        <end position="429"/>
    </location>
</feature>
<feature type="compositionally biased region" description="Basic residues" evidence="5">
    <location>
        <begin position="438"/>
        <end position="497"/>
    </location>
</feature>
<feature type="compositionally biased region" description="Acidic residues" evidence="5">
    <location>
        <begin position="518"/>
        <end position="535"/>
    </location>
</feature>
<feature type="compositionally biased region" description="Low complexity" evidence="5">
    <location>
        <begin position="562"/>
        <end position="581"/>
    </location>
</feature>
<feature type="active site" description="Proton acceptor" evidence="3 4">
    <location>
        <position position="815"/>
    </location>
</feature>
<feature type="binding site" evidence="3">
    <location>
        <begin position="693"/>
        <end position="701"/>
    </location>
    <ligand>
        <name>ATP</name>
        <dbReference type="ChEBI" id="CHEBI:30616"/>
    </ligand>
</feature>
<feature type="binding site" evidence="3">
    <location>
        <position position="717"/>
    </location>
    <ligand>
        <name>ATP</name>
        <dbReference type="ChEBI" id="CHEBI:30616"/>
    </ligand>
</feature>
<feature type="modified residue" description="N-acetylalanine" evidence="1">
    <location>
        <position position="2"/>
    </location>
</feature>
<feature type="modified residue" description="Phosphoserine" evidence="8">
    <location>
        <position position="8"/>
    </location>
</feature>
<feature type="modified residue" description="Phosphoserine" evidence="8">
    <location>
        <position position="21"/>
    </location>
</feature>
<feature type="modified residue" description="Phosphoserine" evidence="8">
    <location>
        <position position="24"/>
    </location>
</feature>
<feature type="modified residue" description="Phosphoserine" evidence="8">
    <location>
        <position position="33"/>
    </location>
</feature>
<feature type="modified residue" description="Phosphoserine" evidence="8">
    <location>
        <position position="88"/>
    </location>
</feature>
<feature type="modified residue" description="Phosphoserine" evidence="8">
    <location>
        <position position="94"/>
    </location>
</feature>
<feature type="modified residue" description="N6-acetyllysine; alternate" evidence="2">
    <location>
        <position position="100"/>
    </location>
</feature>
<feature type="modified residue" description="Phosphoserine" evidence="1">
    <location>
        <position position="132"/>
    </location>
</feature>
<feature type="modified residue" description="Phosphotyrosine" evidence="1">
    <location>
        <position position="141"/>
    </location>
</feature>
<feature type="modified residue" description="Phosphoserine" evidence="8">
    <location>
        <position position="143"/>
    </location>
</feature>
<feature type="modified residue" description="Phosphoserine" evidence="8">
    <location>
        <position position="145"/>
    </location>
</feature>
<feature type="modified residue" description="Phosphoserine" evidence="1">
    <location>
        <position position="167"/>
    </location>
</feature>
<feature type="modified residue" description="Phosphoserine" evidence="1">
    <location>
        <position position="240"/>
    </location>
</feature>
<feature type="modified residue" description="Phosphoserine" evidence="1">
    <location>
        <position position="242"/>
    </location>
</feature>
<feature type="modified residue" description="Phosphoserine" evidence="1">
    <location>
        <position position="258"/>
    </location>
</feature>
<feature type="modified residue" description="Phosphoserine" evidence="1">
    <location>
        <position position="278"/>
    </location>
</feature>
<feature type="modified residue" description="Phosphoserine" evidence="1">
    <location>
        <position position="292"/>
    </location>
</feature>
<feature type="modified residue" description="Phosphoserine" evidence="1">
    <location>
        <position position="294"/>
    </location>
</feature>
<feature type="modified residue" description="Phosphoserine" evidence="1">
    <location>
        <position position="328"/>
    </location>
</feature>
<feature type="modified residue" description="Phosphoserine" evidence="1">
    <location>
        <position position="354"/>
    </location>
</feature>
<feature type="modified residue" description="Phosphoserine" evidence="1">
    <location>
        <position position="356"/>
    </location>
</feature>
<feature type="modified residue" description="Phosphoserine" evidence="8">
    <location>
        <position position="366"/>
    </location>
</feature>
<feature type="modified residue" description="Phosphoserine" evidence="8">
    <location>
        <position position="368"/>
    </location>
</feature>
<feature type="modified residue" description="Phosphothreonine" evidence="1">
    <location>
        <position position="385"/>
    </location>
</feature>
<feature type="modified residue" description="Phosphoserine" evidence="1">
    <location>
        <position position="387"/>
    </location>
</feature>
<feature type="modified residue" description="Phosphoserine" evidence="1">
    <location>
        <position position="427"/>
    </location>
</feature>
<feature type="modified residue" description="Phosphoserine" evidence="8">
    <location>
        <position position="431"/>
    </location>
</feature>
<feature type="modified residue" description="Phosphoserine" evidence="1">
    <location>
        <position position="437"/>
    </location>
</feature>
<feature type="modified residue" description="Phosphoserine" evidence="8">
    <location>
        <position position="518"/>
    </location>
</feature>
<feature type="modified residue" description="Phosphoserine" evidence="8">
    <location>
        <position position="519"/>
    </location>
</feature>
<feature type="modified residue" description="Phosphoserine" evidence="8">
    <location>
        <position position="520"/>
    </location>
</feature>
<feature type="modified residue" description="Phosphoserine" evidence="1">
    <location>
        <position position="565"/>
    </location>
</feature>
<feature type="modified residue" description="Phosphoserine" evidence="1">
    <location>
        <position position="569"/>
    </location>
</feature>
<feature type="modified residue" description="Phosphoserine" evidence="2">
    <location>
        <position position="576"/>
    </location>
</feature>
<feature type="modified residue" description="Phosphoserine" evidence="8">
    <location>
        <position position="578"/>
    </location>
</feature>
<feature type="modified residue" description="Phosphoserine" evidence="8">
    <location>
        <position position="580"/>
    </location>
</feature>
<feature type="modified residue" description="N6-acetyllysine" evidence="1">
    <location>
        <position position="717"/>
    </location>
</feature>
<feature type="modified residue" description="Phosphotyrosine" evidence="8">
    <location>
        <position position="849"/>
    </location>
</feature>
<feature type="modified residue" description="Phosphoserine" evidence="7">
    <location>
        <position position="852"/>
    </location>
</feature>
<feature type="cross-link" description="Glycyl lysine isopeptide (Lys-Gly) (interchain with G-Cter in SUMO2); alternate" evidence="1">
    <location>
        <position position="100"/>
    </location>
</feature>
<feature type="cross-link" description="Glycyl lysine isopeptide (Lys-Gly) (interchain with G-Cter in SUMO2)" evidence="1">
    <location>
        <position position="112"/>
    </location>
</feature>
<feature type="cross-link" description="Glycyl lysine isopeptide (Lys-Gly) (interchain with G-Cter in SUMO1); alternate" evidence="1">
    <location>
        <position position="118"/>
    </location>
</feature>
<feature type="cross-link" description="Glycyl lysine isopeptide (Lys-Gly) (interchain with G-Cter in SUMO2); alternate" evidence="1">
    <location>
        <position position="118"/>
    </location>
</feature>
<feature type="cross-link" description="Glycyl lysine isopeptide (Lys-Gly) (interchain with G-Cter in SUMO2)" evidence="1">
    <location>
        <position position="171"/>
    </location>
</feature>
<feature type="cross-link" description="Glycyl lysine isopeptide (Lys-Gly) (interchain with G-Cter in SUMO2)" evidence="1">
    <location>
        <position position="178"/>
    </location>
</feature>
<feature type="cross-link" description="Glycyl lysine isopeptide (Lys-Gly) (interchain with G-Cter in SUMO2)" evidence="1">
    <location>
        <position position="593"/>
    </location>
</feature>
<feature type="cross-link" description="Glycyl lysine isopeptide (Lys-Gly) (interchain with G-Cter in SUMO2)" evidence="1">
    <location>
        <position position="659"/>
    </location>
</feature>